<keyword id="KW-0025">Alternative splicing</keyword>
<keyword id="KW-0084">Basement membrane</keyword>
<keyword id="KW-0106">Calcium</keyword>
<keyword id="KW-0131">Cell cycle</keyword>
<keyword id="KW-0132">Cell division</keyword>
<keyword id="KW-0965">Cell junction</keyword>
<keyword id="KW-0963">Cytoplasm</keyword>
<keyword id="KW-1015">Disulfide bond</keyword>
<keyword id="KW-0245">EGF-like domain</keyword>
<keyword id="KW-0272">Extracellular matrix</keyword>
<keyword id="KW-0325">Glycoprotein</keyword>
<keyword id="KW-1185">Reference proteome</keyword>
<keyword id="KW-0677">Repeat</keyword>
<keyword id="KW-0964">Secreted</keyword>
<keyword id="KW-0732">Signal</keyword>
<gene>
    <name evidence="16" type="primary">Hmcn1</name>
</gene>
<comment type="function">
    <text evidence="1 8 9 10 13">Involved in transforming growth factor beta-mediated rearrangement of the podocyte cytoskeleton which includes reduction of F-actin fibers and broadening, flattening and elongation of podocytes (By similarity). Plays a role in basement membrane organization (PubMed:34504132). May promote cleavage furrow maturation during cytokinesis in preimplantation embryos (PubMed:21215633). May play a role in the architecture of adhesive and flexible epithelial cell junctions (PubMed:17015624). May play a role during myocardial remodeling by imparting an effect on cardiac fibroblast migration (PubMed:24951538).</text>
</comment>
<comment type="subcellular location">
    <subcellularLocation>
        <location evidence="8 10 11 12 13">Secreted</location>
        <location evidence="8 10 11 12 13">Extracellular space</location>
        <location evidence="8 10 11 12 13">Extracellular matrix</location>
        <location evidence="8 10 11 12 13">Basement membrane</location>
    </subcellularLocation>
    <subcellularLocation>
        <location evidence="8 11">Cytoplasm</location>
    </subcellularLocation>
    <subcellularLocation>
        <location evidence="8">Cell junction</location>
    </subcellularLocation>
    <subcellularLocation>
        <location evidence="9">Cleavage furrow</location>
    </subcellularLocation>
    <text evidence="8 9 11 12">Has been detected in the glomerular basement membrane in one study (PubMed:29488390). However, another study found expression in the glomerular mesangial matrix but not in the glomerular basement membrane (PubMed:32035013). The antibody used in PubMed:17015624 and PubMed:21215633 to determine subcellular location does not distinguish between HMCN1 and HMCN2 (PubMed:17015624, PubMed:21215633).</text>
</comment>
<comment type="alternative products">
    <event type="alternative splicing"/>
    <isoform>
        <id>D3YXG0-1</id>
        <name>1</name>
        <sequence type="displayed"/>
    </isoform>
    <isoform>
        <id>D3YXG0-2</id>
        <name>2</name>
        <sequence type="described" ref="VSP_058526"/>
    </isoform>
</comment>
<comment type="tissue specificity">
    <text evidence="8 10 11 12 13">In the kidney, expressed in the glomerulus (at protein level) (PubMed:29488390, PubMed:32035013). Expressed in whisker and hair follicles, eye, tongue, and splenic and lymph node conduits (at protein level) (PubMed:32035013). In the embryo, localizes to the cleavage furrow at the two-cell stage (at protein level) (PubMed:34504132). In neonatal skin, expressed throughout the dermis (at protein level) (PubMed:34504132). In adult skin, strongly concentrated at the dermal side of the basement membrane but not detectable in the deeper dermis (PubMed:34504132). Shows tendon-specific localization at the myotendinous junction and is also detected in the perichondrium (at protein level) (PubMed:34504132). Expressed by chondrocytes residing in articular cartilage and the femoral growth plate of 52 week old mice (at protein level) (PubMed:34504132). Expressed in vascular endothelial cells in coronary arteries and sparsely in endocardial endothelium (at protein level) (PubMed:24951538). Expressed in skin, tongue, lung and eye (PubMed:17015624). At 14.5 dpc, expressed in the vibrissae, dermis, forelimb, kidney, intestine, lung and iliac cartilage where expression is found mainly in mesenchymal cells (PubMed:34504132).</text>
</comment>
<comment type="developmental stage">
    <text evidence="11">Expression increases with age from 3 weeks to 15-20 weeks (at protein level).</text>
</comment>
<comment type="induction">
    <text evidence="10 11 13">Induced by high glucose and transforming growth factor beta (at protein level) (PubMed:29488390). Following wounding, up-regulated in the dermis adjacent to the epidermal tongues of closing wounds (at protein level) (PubMed:34504132). Up-regulated following myocardial infarction.</text>
</comment>
<comment type="disruption phenotype">
    <text evidence="9 12 13">Mutants are viable and fertile with no gross phenotypes (PubMed:32035013, PubMed:34504132). Ultrastructural basement membrane alterations are observed at dermal-epidermal and myotendinous junctions (PubMed:34504132). However, another study showed that embryos arrest between the one- and four-cell stages with cleavage furrows that form but fail to ingress and often retract prior to completion, resulting in multinucleate cells (PubMed:21215633). Double knockout of Hmcn1 and Hmcn2 results in no overt phenotypes with mice being viable and fertile (PubMed:32035013).</text>
</comment>
<comment type="caution">
    <text evidence="9 12 13">Has been shown in one study to play a role in cleavage furrow maturation during cytokinesis (PubMed:21215633). However, other studies have shown no role in this process (PubMed:32035013, PubMed:34504132).</text>
</comment>
<feature type="signal peptide" evidence="2">
    <location>
        <begin position="1"/>
        <end position="21"/>
    </location>
</feature>
<feature type="chain" id="PRO_5003053106" description="Hemicentin-1" evidence="2">
    <location>
        <begin position="22"/>
        <end position="5634"/>
    </location>
</feature>
<feature type="domain" description="VWFA" evidence="6">
    <location>
        <begin position="41"/>
        <end position="216"/>
    </location>
</feature>
<feature type="domain" description="Ig-like C2-type 1" evidence="4">
    <location>
        <begin position="431"/>
        <end position="517"/>
    </location>
</feature>
<feature type="domain" description="Ig-like C2-type 2" evidence="4">
    <location>
        <begin position="520"/>
        <end position="607"/>
    </location>
</feature>
<feature type="domain" description="Ig-like C2-type 3" evidence="4">
    <location>
        <begin position="612"/>
        <end position="697"/>
    </location>
</feature>
<feature type="domain" description="Ig-like C2-type 4" evidence="4">
    <location>
        <begin position="702"/>
        <end position="788"/>
    </location>
</feature>
<feature type="domain" description="Ig-like C2-type 5" evidence="4">
    <location>
        <begin position="793"/>
        <end position="883"/>
    </location>
</feature>
<feature type="domain" description="Ig-like C2-type 6" evidence="4">
    <location>
        <begin position="890"/>
        <end position="976"/>
    </location>
</feature>
<feature type="domain" description="Ig-like C2-type 7" evidence="4">
    <location>
        <begin position="981"/>
        <end position="1067"/>
    </location>
</feature>
<feature type="domain" description="Ig-like C2-type 8" evidence="4">
    <location>
        <begin position="1072"/>
        <end position="1166"/>
    </location>
</feature>
<feature type="domain" description="Ig-like C2-type 9" evidence="4">
    <location>
        <begin position="1171"/>
        <end position="1254"/>
    </location>
</feature>
<feature type="domain" description="Ig-like C2-type 10" evidence="4">
    <location>
        <begin position="1261"/>
        <end position="1353"/>
    </location>
</feature>
<feature type="domain" description="Ig-like C2-type 11" evidence="4">
    <location>
        <begin position="1357"/>
        <end position="1446"/>
    </location>
</feature>
<feature type="domain" description="Ig-like C2-type 12" evidence="4">
    <location>
        <begin position="1451"/>
        <end position="1540"/>
    </location>
</feature>
<feature type="domain" description="Ig-like C2-type 13" evidence="4">
    <location>
        <begin position="1545"/>
        <end position="1633"/>
    </location>
</feature>
<feature type="domain" description="Ig-like C2-type 14" evidence="4">
    <location>
        <begin position="1638"/>
        <end position="1723"/>
    </location>
</feature>
<feature type="domain" description="Ig-like C2-type 15" evidence="4">
    <location>
        <begin position="1732"/>
        <end position="1820"/>
    </location>
</feature>
<feature type="domain" description="Ig-like C2-type 16" evidence="4">
    <location>
        <begin position="1825"/>
        <end position="1913"/>
    </location>
</feature>
<feature type="domain" description="Ig-like C2-type 17" evidence="4">
    <location>
        <begin position="1918"/>
        <end position="2006"/>
    </location>
</feature>
<feature type="domain" description="Ig-like C2-type 18" evidence="4">
    <location>
        <begin position="2011"/>
        <end position="2096"/>
    </location>
</feature>
<feature type="domain" description="Ig-like C2-type 19" evidence="4">
    <location>
        <begin position="2103"/>
        <end position="2189"/>
    </location>
</feature>
<feature type="domain" description="Ig-like C2-type 20" evidence="4">
    <location>
        <begin position="2194"/>
        <end position="2284"/>
    </location>
</feature>
<feature type="domain" description="Ig-like C2-type 21" evidence="4">
    <location>
        <begin position="2289"/>
        <end position="2378"/>
    </location>
</feature>
<feature type="domain" description="Ig-like C2-type 22" evidence="4">
    <location>
        <begin position="2383"/>
        <end position="2472"/>
    </location>
</feature>
<feature type="domain" description="Ig-like C2-type 23" evidence="4">
    <location>
        <begin position="2477"/>
        <end position="2565"/>
    </location>
</feature>
<feature type="domain" description="Ig-like C2-type 24" evidence="4">
    <location>
        <begin position="2570"/>
        <end position="2661"/>
    </location>
</feature>
<feature type="domain" description="Ig-like C2-type 25" evidence="4">
    <location>
        <begin position="2665"/>
        <end position="2762"/>
    </location>
</feature>
<feature type="domain" description="Ig-like C2-type 26" evidence="4">
    <location>
        <begin position="2765"/>
        <end position="2863"/>
    </location>
</feature>
<feature type="domain" description="Ig-like C2-type 27" evidence="4">
    <location>
        <begin position="2867"/>
        <end position="2958"/>
    </location>
</feature>
<feature type="domain" description="Ig-like C2-type 28" evidence="4">
    <location>
        <begin position="2962"/>
        <end position="3050"/>
    </location>
</feature>
<feature type="domain" description="Ig-like C2-type 29" evidence="4">
    <location>
        <begin position="3055"/>
        <end position="3145"/>
    </location>
</feature>
<feature type="domain" description="Ig-like C2-type 30" evidence="4">
    <location>
        <begin position="3155"/>
        <end position="3227"/>
    </location>
</feature>
<feature type="domain" description="Ig-like C2-type 31" evidence="4">
    <location>
        <begin position="3244"/>
        <end position="3334"/>
    </location>
</feature>
<feature type="domain" description="Ig-like C2-type 32" evidence="4">
    <location>
        <begin position="3339"/>
        <end position="3428"/>
    </location>
</feature>
<feature type="domain" description="Ig-like C2-type 33" evidence="4">
    <location>
        <begin position="3433"/>
        <end position="3515"/>
    </location>
</feature>
<feature type="domain" description="Ig-like C2-type 34" evidence="4">
    <location>
        <begin position="3526"/>
        <end position="3614"/>
    </location>
</feature>
<feature type="domain" description="Ig-like C2-type 35" evidence="4">
    <location>
        <begin position="3619"/>
        <end position="3707"/>
    </location>
</feature>
<feature type="domain" description="Ig-like C2-type 36" evidence="4">
    <location>
        <begin position="3712"/>
        <end position="3798"/>
    </location>
</feature>
<feature type="domain" description="Ig-like C2-type 37" evidence="4">
    <location>
        <begin position="3803"/>
        <end position="3891"/>
    </location>
</feature>
<feature type="domain" description="Ig-like C2-type 38" evidence="4">
    <location>
        <begin position="3896"/>
        <end position="3982"/>
    </location>
</feature>
<feature type="domain" description="Ig-like C2-type 39" evidence="4">
    <location>
        <begin position="3987"/>
        <end position="4073"/>
    </location>
</feature>
<feature type="domain" description="Ig-like C2-type 40" evidence="4">
    <location>
        <begin position="4077"/>
        <end position="4163"/>
    </location>
</feature>
<feature type="domain" description="Ig-like C2-type 41" evidence="4">
    <location>
        <begin position="4168"/>
        <end position="4252"/>
    </location>
</feature>
<feature type="domain" description="Ig-like C2-type 42" evidence="4">
    <location>
        <begin position="4259"/>
        <end position="4332"/>
    </location>
</feature>
<feature type="domain" description="Ig-like C2-type 43" evidence="4">
    <location>
        <begin position="4347"/>
        <end position="4434"/>
    </location>
</feature>
<feature type="domain" description="Ig-like C2-type 44" evidence="4">
    <location>
        <begin position="4439"/>
        <end position="4526"/>
    </location>
</feature>
<feature type="domain" description="TSP type-1 1" evidence="5">
    <location>
        <begin position="4528"/>
        <end position="4583"/>
    </location>
</feature>
<feature type="domain" description="TSP type-1 2" evidence="5">
    <location>
        <begin position="4585"/>
        <end position="4640"/>
    </location>
</feature>
<feature type="domain" description="TSP type-1 3" evidence="5">
    <location>
        <begin position="4642"/>
        <end position="4697"/>
    </location>
</feature>
<feature type="domain" description="TSP type-1 4" evidence="5">
    <location>
        <begin position="4699"/>
        <end position="4754"/>
    </location>
</feature>
<feature type="domain" description="TSP type-1 5" evidence="5">
    <location>
        <begin position="4756"/>
        <end position="4811"/>
    </location>
</feature>
<feature type="domain" description="TSP type-1 6" evidence="5">
    <location>
        <begin position="4813"/>
        <end position="4868"/>
    </location>
</feature>
<feature type="domain" description="Nidogen G2 beta-barrel" evidence="7">
    <location>
        <begin position="4870"/>
        <end position="5092"/>
    </location>
</feature>
<feature type="domain" description="EGF-like 1; calcium-binding" evidence="3">
    <location>
        <begin position="5106"/>
        <end position="5145"/>
    </location>
</feature>
<feature type="domain" description="EGF-like 2; calcium-binding" evidence="3">
    <location>
        <begin position="5146"/>
        <end position="5189"/>
    </location>
</feature>
<feature type="domain" description="EGF-like 3; calcium-binding" evidence="3">
    <location>
        <begin position="5191"/>
        <end position="5228"/>
    </location>
</feature>
<feature type="domain" description="EGF-like 4; calcium-binding" evidence="3">
    <location>
        <begin position="5229"/>
        <end position="5269"/>
    </location>
</feature>
<feature type="domain" description="EGF-like 5; calcium-binding" evidence="3">
    <location>
        <begin position="5271"/>
        <end position="5306"/>
    </location>
</feature>
<feature type="domain" description="EGF-like 6; calcium-binding" evidence="3">
    <location>
        <begin position="5314"/>
        <end position="5354"/>
    </location>
</feature>
<feature type="domain" description="EGF-like 7; calcium-binding" evidence="3">
    <location>
        <begin position="5431"/>
        <end position="5470"/>
    </location>
</feature>
<feature type="glycosylation site" description="O-linked (GalNAc...) threonine" evidence="2">
    <location>
        <position position="615"/>
    </location>
</feature>
<feature type="glycosylation site" description="O-linked (GalNAc...) threonine" evidence="2">
    <location>
        <position position="1292"/>
    </location>
</feature>
<feature type="glycosylation site" description="O-linked (GalNAc...) threonine" evidence="2">
    <location>
        <position position="1386"/>
    </location>
</feature>
<feature type="glycosylation site" description="O-linked (GalNAc...) threonine" evidence="2">
    <location>
        <position position="1639"/>
    </location>
</feature>
<feature type="glycosylation site" description="O-linked (GalNAc...) threonine" evidence="2">
    <location>
        <position position="1826"/>
    </location>
</feature>
<feature type="glycosylation site" description="O-linked (GalNAc...) threonine" evidence="2">
    <location>
        <position position="3151"/>
    </location>
</feature>
<feature type="glycosylation site" description="O-linked (GalNAc...) threonine" evidence="2">
    <location>
        <position position="3897"/>
    </location>
</feature>
<feature type="glycosylation site" description="O-linked (GalNAc...) threonine" evidence="2">
    <location>
        <position position="4379"/>
    </location>
</feature>
<feature type="disulfide bond" evidence="4">
    <location>
        <begin position="451"/>
        <end position="499"/>
    </location>
</feature>
<feature type="disulfide bond" evidence="4">
    <location>
        <begin position="541"/>
        <end position="591"/>
    </location>
</feature>
<feature type="disulfide bond" evidence="4">
    <location>
        <begin position="633"/>
        <end position="681"/>
    </location>
</feature>
<feature type="disulfide bond" evidence="4">
    <location>
        <begin position="723"/>
        <end position="772"/>
    </location>
</feature>
<feature type="disulfide bond" evidence="4">
    <location>
        <begin position="814"/>
        <end position="867"/>
    </location>
</feature>
<feature type="disulfide bond" evidence="4">
    <location>
        <begin position="911"/>
        <end position="960"/>
    </location>
</feature>
<feature type="disulfide bond" evidence="4">
    <location>
        <begin position="1002"/>
        <end position="1051"/>
    </location>
</feature>
<feature type="disulfide bond" evidence="4">
    <location>
        <begin position="1101"/>
        <end position="1150"/>
    </location>
</feature>
<feature type="disulfide bond" evidence="4">
    <location>
        <begin position="1192"/>
        <end position="1240"/>
    </location>
</feature>
<feature type="disulfide bond" evidence="4">
    <location>
        <begin position="1287"/>
        <end position="1337"/>
    </location>
</feature>
<feature type="disulfide bond" evidence="4">
    <location>
        <begin position="1381"/>
        <end position="1430"/>
    </location>
</feature>
<feature type="disulfide bond" evidence="4">
    <location>
        <begin position="1474"/>
        <end position="1524"/>
    </location>
</feature>
<feature type="disulfide bond" evidence="4">
    <location>
        <begin position="1568"/>
        <end position="1617"/>
    </location>
</feature>
<feature type="disulfide bond" evidence="4">
    <location>
        <begin position="1662"/>
        <end position="1711"/>
    </location>
</feature>
<feature type="disulfide bond" evidence="4">
    <location>
        <begin position="1755"/>
        <end position="1804"/>
    </location>
</feature>
<feature type="disulfide bond" evidence="4">
    <location>
        <begin position="1847"/>
        <end position="1897"/>
    </location>
</feature>
<feature type="disulfide bond" evidence="4">
    <location>
        <begin position="1941"/>
        <end position="1990"/>
    </location>
</feature>
<feature type="disulfide bond" evidence="4">
    <location>
        <begin position="2032"/>
        <end position="2082"/>
    </location>
</feature>
<feature type="disulfide bond" evidence="4">
    <location>
        <begin position="2124"/>
        <end position="2173"/>
    </location>
</feature>
<feature type="disulfide bond" evidence="4">
    <location>
        <begin position="2217"/>
        <end position="2268"/>
    </location>
</feature>
<feature type="disulfide bond" evidence="4">
    <location>
        <begin position="2313"/>
        <end position="2362"/>
    </location>
</feature>
<feature type="disulfide bond" evidence="4">
    <location>
        <begin position="2407"/>
        <end position="2456"/>
    </location>
</feature>
<feature type="disulfide bond" evidence="4">
    <location>
        <begin position="2500"/>
        <end position="2549"/>
    </location>
</feature>
<feature type="disulfide bond" evidence="4">
    <location>
        <begin position="2596"/>
        <end position="2645"/>
    </location>
</feature>
<feature type="disulfide bond" evidence="4">
    <location>
        <begin position="2695"/>
        <end position="2744"/>
    </location>
</feature>
<feature type="disulfide bond" evidence="4">
    <location>
        <begin position="2798"/>
        <end position="2847"/>
    </location>
</feature>
<feature type="disulfide bond" evidence="4">
    <location>
        <begin position="2893"/>
        <end position="2942"/>
    </location>
</feature>
<feature type="disulfide bond" evidence="4">
    <location>
        <begin position="2985"/>
        <end position="3034"/>
    </location>
</feature>
<feature type="disulfide bond" evidence="4">
    <location>
        <begin position="3080"/>
        <end position="3129"/>
    </location>
</feature>
<feature type="disulfide bond" evidence="4">
    <location>
        <begin position="3172"/>
        <end position="3223"/>
    </location>
</feature>
<feature type="disulfide bond" evidence="4">
    <location>
        <begin position="3267"/>
        <end position="3318"/>
    </location>
</feature>
<feature type="disulfide bond" evidence="4">
    <location>
        <begin position="3363"/>
        <end position="3412"/>
    </location>
</feature>
<feature type="disulfide bond" evidence="4">
    <location>
        <begin position="3456"/>
        <end position="3505"/>
    </location>
</feature>
<feature type="disulfide bond" evidence="4">
    <location>
        <begin position="3549"/>
        <end position="3598"/>
    </location>
</feature>
<feature type="disulfide bond" evidence="4">
    <location>
        <begin position="3642"/>
        <end position="3691"/>
    </location>
</feature>
<feature type="disulfide bond" evidence="4">
    <location>
        <begin position="3733"/>
        <end position="3782"/>
    </location>
</feature>
<feature type="disulfide bond" evidence="4">
    <location>
        <begin position="3824"/>
        <end position="3875"/>
    </location>
</feature>
<feature type="disulfide bond" evidence="4">
    <location>
        <begin position="3917"/>
        <end position="3966"/>
    </location>
</feature>
<feature type="disulfide bond" evidence="4">
    <location>
        <begin position="4008"/>
        <end position="4057"/>
    </location>
</feature>
<feature type="disulfide bond" evidence="4">
    <location>
        <begin position="4099"/>
        <end position="4147"/>
    </location>
</feature>
<feature type="disulfide bond" evidence="4">
    <location>
        <begin position="4189"/>
        <end position="4238"/>
    </location>
</feature>
<feature type="disulfide bond" evidence="4">
    <location>
        <begin position="4280"/>
        <end position="4327"/>
    </location>
</feature>
<feature type="disulfide bond" evidence="4">
    <location>
        <begin position="4370"/>
        <end position="4418"/>
    </location>
</feature>
<feature type="disulfide bond" evidence="4">
    <location>
        <begin position="4460"/>
        <end position="4508"/>
    </location>
</feature>
<feature type="disulfide bond" evidence="5">
    <location>
        <begin position="4540"/>
        <end position="4577"/>
    </location>
</feature>
<feature type="disulfide bond" evidence="5">
    <location>
        <begin position="4544"/>
        <end position="4582"/>
    </location>
</feature>
<feature type="disulfide bond" evidence="5">
    <location>
        <begin position="4555"/>
        <end position="4567"/>
    </location>
</feature>
<feature type="disulfide bond" evidence="5">
    <location>
        <begin position="4597"/>
        <end position="4634"/>
    </location>
</feature>
<feature type="disulfide bond" evidence="5">
    <location>
        <begin position="4601"/>
        <end position="4639"/>
    </location>
</feature>
<feature type="disulfide bond" evidence="5">
    <location>
        <begin position="4612"/>
        <end position="4624"/>
    </location>
</feature>
<feature type="disulfide bond" evidence="5">
    <location>
        <begin position="4654"/>
        <end position="4691"/>
    </location>
</feature>
<feature type="disulfide bond" evidence="5">
    <location>
        <begin position="4658"/>
        <end position="4696"/>
    </location>
</feature>
<feature type="disulfide bond" evidence="5">
    <location>
        <begin position="4669"/>
        <end position="4681"/>
    </location>
</feature>
<feature type="disulfide bond" evidence="5">
    <location>
        <begin position="4711"/>
        <end position="4748"/>
    </location>
</feature>
<feature type="disulfide bond" evidence="5">
    <location>
        <begin position="4715"/>
        <end position="4753"/>
    </location>
</feature>
<feature type="disulfide bond" evidence="5">
    <location>
        <begin position="4726"/>
        <end position="4738"/>
    </location>
</feature>
<feature type="disulfide bond" evidence="5">
    <location>
        <begin position="4768"/>
        <end position="4805"/>
    </location>
</feature>
<feature type="disulfide bond" evidence="5">
    <location>
        <begin position="4772"/>
        <end position="4810"/>
    </location>
</feature>
<feature type="disulfide bond" evidence="5">
    <location>
        <begin position="4783"/>
        <end position="4795"/>
    </location>
</feature>
<feature type="disulfide bond" evidence="5">
    <location>
        <begin position="4825"/>
        <end position="4862"/>
    </location>
</feature>
<feature type="disulfide bond" evidence="5">
    <location>
        <begin position="4829"/>
        <end position="4867"/>
    </location>
</feature>
<feature type="disulfide bond" evidence="5">
    <location>
        <begin position="4840"/>
        <end position="4852"/>
    </location>
</feature>
<feature type="disulfide bond" evidence="3">
    <location>
        <begin position="5110"/>
        <end position="5120"/>
    </location>
</feature>
<feature type="disulfide bond" evidence="3">
    <location>
        <begin position="5116"/>
        <end position="5129"/>
    </location>
</feature>
<feature type="disulfide bond" evidence="3">
    <location>
        <begin position="5131"/>
        <end position="5144"/>
    </location>
</feature>
<feature type="disulfide bond" evidence="3">
    <location>
        <begin position="5195"/>
        <end position="5205"/>
    </location>
</feature>
<feature type="disulfide bond" evidence="3">
    <location>
        <begin position="5201"/>
        <end position="5214"/>
    </location>
</feature>
<feature type="disulfide bond" evidence="3">
    <location>
        <begin position="5216"/>
        <end position="5227"/>
    </location>
</feature>
<feature type="disulfide bond" evidence="3">
    <location>
        <begin position="5275"/>
        <end position="5288"/>
    </location>
</feature>
<feature type="disulfide bond" evidence="3">
    <location>
        <begin position="5282"/>
        <end position="5297"/>
    </location>
</feature>
<feature type="disulfide bond" evidence="3">
    <location>
        <begin position="5318"/>
        <end position="5329"/>
    </location>
</feature>
<feature type="disulfide bond" evidence="3">
    <location>
        <begin position="5325"/>
        <end position="5338"/>
    </location>
</feature>
<feature type="disulfide bond" evidence="3">
    <location>
        <begin position="5340"/>
        <end position="5353"/>
    </location>
</feature>
<feature type="disulfide bond" evidence="3">
    <location>
        <begin position="5435"/>
        <end position="5445"/>
    </location>
</feature>
<feature type="disulfide bond" evidence="3">
    <location>
        <begin position="5441"/>
        <end position="5454"/>
    </location>
</feature>
<feature type="disulfide bond" evidence="3">
    <location>
        <begin position="5456"/>
        <end position="5469"/>
    </location>
</feature>
<feature type="splice variant" id="VSP_058526" description="In isoform 2.">
    <location>
        <begin position="5316"/>
        <end position="5432"/>
    </location>
</feature>
<organism evidence="17">
    <name type="scientific">Mus musculus</name>
    <name type="common">Mouse</name>
    <dbReference type="NCBI Taxonomy" id="10090"/>
    <lineage>
        <taxon>Eukaryota</taxon>
        <taxon>Metazoa</taxon>
        <taxon>Chordata</taxon>
        <taxon>Craniata</taxon>
        <taxon>Vertebrata</taxon>
        <taxon>Euteleostomi</taxon>
        <taxon>Mammalia</taxon>
        <taxon>Eutheria</taxon>
        <taxon>Euarchontoglires</taxon>
        <taxon>Glires</taxon>
        <taxon>Rodentia</taxon>
        <taxon>Myomorpha</taxon>
        <taxon>Muroidea</taxon>
        <taxon>Muridae</taxon>
        <taxon>Murinae</taxon>
        <taxon>Mus</taxon>
        <taxon>Mus</taxon>
    </lineage>
</organism>
<evidence type="ECO:0000250" key="1">
    <source>
        <dbReference type="UniProtKB" id="Q96RW7"/>
    </source>
</evidence>
<evidence type="ECO:0000255" key="2"/>
<evidence type="ECO:0000255" key="3">
    <source>
        <dbReference type="PROSITE-ProRule" id="PRU00076"/>
    </source>
</evidence>
<evidence type="ECO:0000255" key="4">
    <source>
        <dbReference type="PROSITE-ProRule" id="PRU00114"/>
    </source>
</evidence>
<evidence type="ECO:0000255" key="5">
    <source>
        <dbReference type="PROSITE-ProRule" id="PRU00210"/>
    </source>
</evidence>
<evidence type="ECO:0000255" key="6">
    <source>
        <dbReference type="PROSITE-ProRule" id="PRU00219"/>
    </source>
</evidence>
<evidence type="ECO:0000255" key="7">
    <source>
        <dbReference type="PROSITE-ProRule" id="PRU00348"/>
    </source>
</evidence>
<evidence type="ECO:0000269" key="8">
    <source>
    </source>
</evidence>
<evidence type="ECO:0000269" key="9">
    <source>
    </source>
</evidence>
<evidence type="ECO:0000269" key="10">
    <source>
    </source>
</evidence>
<evidence type="ECO:0000269" key="11">
    <source>
    </source>
</evidence>
<evidence type="ECO:0000269" key="12">
    <source>
    </source>
</evidence>
<evidence type="ECO:0000269" key="13">
    <source>
    </source>
</evidence>
<evidence type="ECO:0000303" key="14">
    <source>
    </source>
</evidence>
<evidence type="ECO:0000305" key="15"/>
<evidence type="ECO:0000312" key="16">
    <source>
        <dbReference type="MGI" id="MGI:2685047"/>
    </source>
</evidence>
<evidence type="ECO:0000312" key="17">
    <source>
        <dbReference type="Proteomes" id="UP000000589"/>
    </source>
</evidence>
<accession>D3YXG0</accession>
<accession>D3Z2Q7</accession>
<dbReference type="EMBL" id="AC111145">
    <property type="status" value="NOT_ANNOTATED_CDS"/>
    <property type="molecule type" value="Genomic_DNA"/>
</dbReference>
<dbReference type="EMBL" id="AC113326">
    <property type="status" value="NOT_ANNOTATED_CDS"/>
    <property type="molecule type" value="Genomic_DNA"/>
</dbReference>
<dbReference type="EMBL" id="AC115051">
    <property type="status" value="NOT_ANNOTATED_CDS"/>
    <property type="molecule type" value="Genomic_DNA"/>
</dbReference>
<dbReference type="EMBL" id="AC124120">
    <property type="status" value="NOT_ANNOTATED_CDS"/>
    <property type="molecule type" value="Genomic_DNA"/>
</dbReference>
<dbReference type="CCDS" id="CCDS15357.2">
    <molecule id="D3YXG0-1"/>
</dbReference>
<dbReference type="RefSeq" id="NP_001019891.2">
    <molecule id="D3YXG0-1"/>
    <property type="nucleotide sequence ID" value="NM_001024720.4"/>
</dbReference>
<dbReference type="FunCoup" id="D3YXG0">
    <property type="interactions" value="100"/>
</dbReference>
<dbReference type="STRING" id="10090.ENSMUSP00000074340"/>
<dbReference type="GlyCosmos" id="D3YXG0">
    <property type="glycosylation" value="8 sites, No reported glycans"/>
</dbReference>
<dbReference type="GlyGen" id="D3YXG0">
    <property type="glycosylation" value="22 sites, 9 N-linked glycans (11 sites), 1 O-linked glycan (2 sites)"/>
</dbReference>
<dbReference type="iPTMnet" id="D3YXG0"/>
<dbReference type="PhosphoSitePlus" id="D3YXG0"/>
<dbReference type="PaxDb" id="10090-ENSMUSP00000074340"/>
<dbReference type="ProteomicsDB" id="273181">
    <molecule id="D3YXG0-1"/>
</dbReference>
<dbReference type="ProteomicsDB" id="273182">
    <molecule id="D3YXG0-2"/>
</dbReference>
<dbReference type="Antibodypedia" id="63332">
    <property type="antibodies" value="23 antibodies from 10 providers"/>
</dbReference>
<dbReference type="Ensembl" id="ENSMUST00000074783.12">
    <molecule id="D3YXG0-1"/>
    <property type="protein sequence ID" value="ENSMUSP00000074340.6"/>
    <property type="gene ID" value="ENSMUSG00000066842.19"/>
</dbReference>
<dbReference type="Ensembl" id="ENSMUST00000137197.9">
    <molecule id="D3YXG0-2"/>
    <property type="protein sequence ID" value="ENSMUSP00000121500.3"/>
    <property type="gene ID" value="ENSMUSG00000066842.19"/>
</dbReference>
<dbReference type="GeneID" id="545370"/>
<dbReference type="KEGG" id="mmu:545370"/>
<dbReference type="UCSC" id="uc007cyj.1">
    <molecule id="D3YXG0-1"/>
    <property type="organism name" value="mouse"/>
</dbReference>
<dbReference type="AGR" id="MGI:2685047"/>
<dbReference type="CTD" id="83872"/>
<dbReference type="MGI" id="MGI:2685047">
    <property type="gene designation" value="Hmcn1"/>
</dbReference>
<dbReference type="VEuPathDB" id="HostDB:ENSMUSG00000066842"/>
<dbReference type="eggNOG" id="KOG4475">
    <property type="taxonomic scope" value="Eukaryota"/>
</dbReference>
<dbReference type="GeneTree" id="ENSGT00940000154614"/>
<dbReference type="InParanoid" id="D3YXG0"/>
<dbReference type="OMA" id="FPSIHWM"/>
<dbReference type="OrthoDB" id="5985519at2759"/>
<dbReference type="PhylomeDB" id="D3YXG0"/>
<dbReference type="BioGRID-ORCS" id="545370">
    <property type="hits" value="1 hit in 77 CRISPR screens"/>
</dbReference>
<dbReference type="PRO" id="PR:D3YXG0"/>
<dbReference type="Proteomes" id="UP000000589">
    <property type="component" value="Chromosome 1"/>
</dbReference>
<dbReference type="RNAct" id="D3YXG0">
    <property type="molecule type" value="protein"/>
</dbReference>
<dbReference type="Bgee" id="ENSMUSG00000066842">
    <property type="expression patterns" value="Expressed in manus and 178 other cell types or tissues"/>
</dbReference>
<dbReference type="ExpressionAtlas" id="D3YXG0">
    <property type="expression patterns" value="baseline and differential"/>
</dbReference>
<dbReference type="GO" id="GO:0005604">
    <property type="term" value="C:basement membrane"/>
    <property type="evidence" value="ECO:0000314"/>
    <property type="project" value="UniProtKB"/>
</dbReference>
<dbReference type="GO" id="GO:0005938">
    <property type="term" value="C:cell cortex"/>
    <property type="evidence" value="ECO:0000314"/>
    <property type="project" value="MGI"/>
</dbReference>
<dbReference type="GO" id="GO:0030054">
    <property type="term" value="C:cell junction"/>
    <property type="evidence" value="ECO:0000314"/>
    <property type="project" value="MGI"/>
</dbReference>
<dbReference type="GO" id="GO:0032154">
    <property type="term" value="C:cleavage furrow"/>
    <property type="evidence" value="ECO:0007669"/>
    <property type="project" value="UniProtKB-SubCell"/>
</dbReference>
<dbReference type="GO" id="GO:0062023">
    <property type="term" value="C:collagen-containing extracellular matrix"/>
    <property type="evidence" value="ECO:0007005"/>
    <property type="project" value="BHF-UCL"/>
</dbReference>
<dbReference type="GO" id="GO:0005737">
    <property type="term" value="C:cytoplasm"/>
    <property type="evidence" value="ECO:0000314"/>
    <property type="project" value="UniProtKB"/>
</dbReference>
<dbReference type="GO" id="GO:0005576">
    <property type="term" value="C:extracellular region"/>
    <property type="evidence" value="ECO:0000314"/>
    <property type="project" value="MGI"/>
</dbReference>
<dbReference type="GO" id="GO:0005927">
    <property type="term" value="C:muscle tendon junction"/>
    <property type="evidence" value="ECO:0000314"/>
    <property type="project" value="UniProtKB"/>
</dbReference>
<dbReference type="GO" id="GO:0005509">
    <property type="term" value="F:calcium ion binding"/>
    <property type="evidence" value="ECO:0007669"/>
    <property type="project" value="InterPro"/>
</dbReference>
<dbReference type="GO" id="GO:0030036">
    <property type="term" value="P:actin cytoskeleton organization"/>
    <property type="evidence" value="ECO:0000250"/>
    <property type="project" value="UniProtKB"/>
</dbReference>
<dbReference type="GO" id="GO:0071711">
    <property type="term" value="P:basement membrane organization"/>
    <property type="evidence" value="ECO:0000315"/>
    <property type="project" value="UniProtKB"/>
</dbReference>
<dbReference type="GO" id="GO:0051301">
    <property type="term" value="P:cell division"/>
    <property type="evidence" value="ECO:0007669"/>
    <property type="project" value="UniProtKB-KW"/>
</dbReference>
<dbReference type="GO" id="GO:0009617">
    <property type="term" value="P:response to bacterium"/>
    <property type="evidence" value="ECO:0000270"/>
    <property type="project" value="MGI"/>
</dbReference>
<dbReference type="CDD" id="cd00054">
    <property type="entry name" value="EGF_CA"/>
    <property type="match status" value="8"/>
</dbReference>
<dbReference type="CDD" id="cd00096">
    <property type="entry name" value="Ig"/>
    <property type="match status" value="7"/>
</dbReference>
<dbReference type="CDD" id="cd00255">
    <property type="entry name" value="nidG2"/>
    <property type="match status" value="1"/>
</dbReference>
<dbReference type="CDD" id="cd00198">
    <property type="entry name" value="vWFA"/>
    <property type="match status" value="1"/>
</dbReference>
<dbReference type="FunFam" id="2.10.25.10:FF:000210">
    <property type="entry name" value="Hemicentin 1"/>
    <property type="match status" value="1"/>
</dbReference>
<dbReference type="FunFam" id="2.10.25.10:FF:000238">
    <property type="entry name" value="Hemicentin 1"/>
    <property type="match status" value="1"/>
</dbReference>
<dbReference type="FunFam" id="2.10.25.10:FF:000352">
    <property type="entry name" value="Hemicentin 1"/>
    <property type="match status" value="1"/>
</dbReference>
<dbReference type="FunFam" id="2.10.25.10:FF:000371">
    <property type="entry name" value="Hemicentin 1"/>
    <property type="match status" value="1"/>
</dbReference>
<dbReference type="FunFam" id="2.10.25.10:FF:000383">
    <property type="entry name" value="Hemicentin 1"/>
    <property type="match status" value="1"/>
</dbReference>
<dbReference type="FunFam" id="2.10.25.10:FF:000385">
    <property type="entry name" value="Hemicentin 1"/>
    <property type="match status" value="1"/>
</dbReference>
<dbReference type="FunFam" id="2.20.100.10:FF:000067">
    <property type="entry name" value="Hemicentin 1"/>
    <property type="match status" value="1"/>
</dbReference>
<dbReference type="FunFam" id="2.40.155.10:FF:000002">
    <property type="entry name" value="Hemicentin 1"/>
    <property type="match status" value="1"/>
</dbReference>
<dbReference type="FunFam" id="2.60.40.10:FF:000130">
    <property type="entry name" value="Hemicentin 1"/>
    <property type="match status" value="6"/>
</dbReference>
<dbReference type="FunFam" id="2.60.40.10:FF:000186">
    <property type="entry name" value="Hemicentin 1"/>
    <property type="match status" value="5"/>
</dbReference>
<dbReference type="FunFam" id="2.60.40.10:FF:000279">
    <property type="entry name" value="Hemicentin 1"/>
    <property type="match status" value="3"/>
</dbReference>
<dbReference type="FunFam" id="2.60.40.10:FF:000285">
    <property type="entry name" value="Hemicentin 1"/>
    <property type="match status" value="3"/>
</dbReference>
<dbReference type="FunFam" id="2.60.40.10:FF:000503">
    <property type="entry name" value="Hemicentin 1"/>
    <property type="match status" value="1"/>
</dbReference>
<dbReference type="FunFam" id="2.60.40.10:FF:000594">
    <property type="entry name" value="Hemicentin 1"/>
    <property type="match status" value="1"/>
</dbReference>
<dbReference type="FunFam" id="2.60.40.10:FF:000675">
    <property type="entry name" value="Hemicentin 1"/>
    <property type="match status" value="1"/>
</dbReference>
<dbReference type="FunFam" id="2.60.40.10:FF:000699">
    <property type="entry name" value="Hemicentin 1"/>
    <property type="match status" value="1"/>
</dbReference>
<dbReference type="FunFam" id="2.60.40.10:FF:000706">
    <property type="entry name" value="Hemicentin 1"/>
    <property type="match status" value="1"/>
</dbReference>
<dbReference type="FunFam" id="2.60.40.10:FF:000708">
    <property type="entry name" value="Hemicentin 1"/>
    <property type="match status" value="1"/>
</dbReference>
<dbReference type="FunFam" id="2.60.40.10:FF:000726">
    <property type="entry name" value="Hemicentin 1"/>
    <property type="match status" value="1"/>
</dbReference>
<dbReference type="FunFam" id="2.60.40.10:FF:000739">
    <property type="entry name" value="Hemicentin 1"/>
    <property type="match status" value="1"/>
</dbReference>
<dbReference type="FunFam" id="2.60.40.10:FF:000749">
    <property type="entry name" value="Hemicentin 1"/>
    <property type="match status" value="1"/>
</dbReference>
<dbReference type="FunFam" id="2.60.40.10:FF:000750">
    <property type="entry name" value="Hemicentin 1"/>
    <property type="match status" value="1"/>
</dbReference>
<dbReference type="FunFam" id="2.60.40.10:FF:000795">
    <property type="entry name" value="Hemicentin 1"/>
    <property type="match status" value="1"/>
</dbReference>
<dbReference type="FunFam" id="2.60.40.10:FF:000824">
    <property type="entry name" value="Hemicentin 1"/>
    <property type="match status" value="1"/>
</dbReference>
<dbReference type="FunFam" id="2.60.40.10:FF:000847">
    <property type="entry name" value="Hemicentin 1"/>
    <property type="match status" value="1"/>
</dbReference>
<dbReference type="FunFam" id="2.60.40.10:FF:000848">
    <property type="entry name" value="Hemicentin 1"/>
    <property type="match status" value="1"/>
</dbReference>
<dbReference type="FunFam" id="2.60.40.10:FF:000890">
    <property type="entry name" value="Hemicentin 1"/>
    <property type="match status" value="1"/>
</dbReference>
<dbReference type="FunFam" id="2.60.40.10:FF:000973">
    <property type="entry name" value="Hemicentin 1"/>
    <property type="match status" value="1"/>
</dbReference>
<dbReference type="FunFam" id="2.60.40.10:FF:000990">
    <property type="entry name" value="Hemicentin 1"/>
    <property type="match status" value="1"/>
</dbReference>
<dbReference type="FunFam" id="2.60.40.10:FF:001020">
    <property type="entry name" value="Hemicentin 1"/>
    <property type="match status" value="1"/>
</dbReference>
<dbReference type="FunFam" id="2.60.40.10:FF:001021">
    <property type="entry name" value="Hemicentin 1"/>
    <property type="match status" value="1"/>
</dbReference>
<dbReference type="FunFam" id="2.60.40.10:FF:001075">
    <property type="entry name" value="Hemicentin 1"/>
    <property type="match status" value="1"/>
</dbReference>
<dbReference type="FunFam" id="2.60.40.10:FF:001131">
    <property type="entry name" value="Hemicentin 1"/>
    <property type="match status" value="1"/>
</dbReference>
<dbReference type="FunFam" id="2.60.40.10:FF:001133">
    <property type="entry name" value="Hemicentin 1"/>
    <property type="match status" value="1"/>
</dbReference>
<dbReference type="FunFam" id="2.60.40.10:FF:001139">
    <property type="entry name" value="Hemicentin 1"/>
    <property type="match status" value="1"/>
</dbReference>
<dbReference type="FunFam" id="2.60.40.10:FF:001252">
    <property type="entry name" value="Hemicentin 1"/>
    <property type="match status" value="1"/>
</dbReference>
<dbReference type="FunFam" id="2.60.40.10:FF:001313">
    <property type="entry name" value="Hemicentin 1"/>
    <property type="match status" value="1"/>
</dbReference>
<dbReference type="FunFam" id="2.60.40.10:FF:001315">
    <property type="entry name" value="Hemicentin 1"/>
    <property type="match status" value="1"/>
</dbReference>
<dbReference type="FunFam" id="2.60.40.10:FF:001527">
    <property type="entry name" value="Hemicentin 1"/>
    <property type="match status" value="1"/>
</dbReference>
<dbReference type="FunFam" id="3.40.50.410:FF:000032">
    <property type="entry name" value="Hemicentin 1"/>
    <property type="match status" value="1"/>
</dbReference>
<dbReference type="FunFam" id="2.10.25.10:FF:000008">
    <property type="entry name" value="Signal peptide, CUB domain, EGF-like 2"/>
    <property type="match status" value="1"/>
</dbReference>
<dbReference type="FunFam" id="2.20.100.10:FF:000007">
    <property type="entry name" value="Thrombospondin 1"/>
    <property type="match status" value="4"/>
</dbReference>
<dbReference type="FunFam" id="2.20.100.10:FF:000002">
    <property type="entry name" value="Unc-5 netrin receptor C"/>
    <property type="match status" value="1"/>
</dbReference>
<dbReference type="Gene3D" id="2.40.155.10">
    <property type="entry name" value="Green fluorescent protein"/>
    <property type="match status" value="1"/>
</dbReference>
<dbReference type="Gene3D" id="2.60.40.10">
    <property type="entry name" value="Immunoglobulins"/>
    <property type="match status" value="44"/>
</dbReference>
<dbReference type="Gene3D" id="2.10.25.10">
    <property type="entry name" value="Laminin"/>
    <property type="match status" value="8"/>
</dbReference>
<dbReference type="Gene3D" id="2.20.100.10">
    <property type="entry name" value="Thrombospondin type-1 (TSP1) repeat"/>
    <property type="match status" value="5"/>
</dbReference>
<dbReference type="Gene3D" id="3.40.50.410">
    <property type="entry name" value="von Willebrand factor, type A domain"/>
    <property type="match status" value="1"/>
</dbReference>
<dbReference type="InterPro" id="IPR026823">
    <property type="entry name" value="cEGF"/>
</dbReference>
<dbReference type="InterPro" id="IPR050958">
    <property type="entry name" value="Cell_Adh-Cytoskel_Orgn"/>
</dbReference>
<dbReference type="InterPro" id="IPR001881">
    <property type="entry name" value="EGF-like_Ca-bd_dom"/>
</dbReference>
<dbReference type="InterPro" id="IPR000742">
    <property type="entry name" value="EGF-like_dom"/>
</dbReference>
<dbReference type="InterPro" id="IPR000152">
    <property type="entry name" value="EGF-type_Asp/Asn_hydroxyl_site"/>
</dbReference>
<dbReference type="InterPro" id="IPR018097">
    <property type="entry name" value="EGF_Ca-bd_CS"/>
</dbReference>
<dbReference type="InterPro" id="IPR006605">
    <property type="entry name" value="G2_nidogen/fibulin_G2F"/>
</dbReference>
<dbReference type="InterPro" id="IPR056475">
    <property type="entry name" value="GBD_Hemicentin/VWA7"/>
</dbReference>
<dbReference type="InterPro" id="IPR009017">
    <property type="entry name" value="GFP"/>
</dbReference>
<dbReference type="InterPro" id="IPR009030">
    <property type="entry name" value="Growth_fac_rcpt_cys_sf"/>
</dbReference>
<dbReference type="InterPro" id="IPR056861">
    <property type="entry name" value="HMCN1-like_VWA"/>
</dbReference>
<dbReference type="InterPro" id="IPR007110">
    <property type="entry name" value="Ig-like_dom"/>
</dbReference>
<dbReference type="InterPro" id="IPR036179">
    <property type="entry name" value="Ig-like_dom_sf"/>
</dbReference>
<dbReference type="InterPro" id="IPR013783">
    <property type="entry name" value="Ig-like_fold"/>
</dbReference>
<dbReference type="InterPro" id="IPR013098">
    <property type="entry name" value="Ig_I-set"/>
</dbReference>
<dbReference type="InterPro" id="IPR003599">
    <property type="entry name" value="Ig_sub"/>
</dbReference>
<dbReference type="InterPro" id="IPR003598">
    <property type="entry name" value="Ig_sub2"/>
</dbReference>
<dbReference type="InterPro" id="IPR013106">
    <property type="entry name" value="Ig_V-set"/>
</dbReference>
<dbReference type="InterPro" id="IPR049883">
    <property type="entry name" value="NOTCH1_EGF-like"/>
</dbReference>
<dbReference type="InterPro" id="IPR000884">
    <property type="entry name" value="TSP1_rpt"/>
</dbReference>
<dbReference type="InterPro" id="IPR036383">
    <property type="entry name" value="TSP1_rpt_sf"/>
</dbReference>
<dbReference type="InterPro" id="IPR036465">
    <property type="entry name" value="vWFA_dom_sf"/>
</dbReference>
<dbReference type="PANTHER" id="PTHR45080">
    <property type="entry name" value="CONTACTIN 5"/>
    <property type="match status" value="1"/>
</dbReference>
<dbReference type="PANTHER" id="PTHR45080:SF28">
    <property type="entry name" value="HEMICENTIN-2"/>
    <property type="match status" value="1"/>
</dbReference>
<dbReference type="Pfam" id="PF12662">
    <property type="entry name" value="cEGF"/>
    <property type="match status" value="1"/>
</dbReference>
<dbReference type="Pfam" id="PF07645">
    <property type="entry name" value="EGF_CA"/>
    <property type="match status" value="6"/>
</dbReference>
<dbReference type="Pfam" id="PF07474">
    <property type="entry name" value="G2F"/>
    <property type="match status" value="1"/>
</dbReference>
<dbReference type="Pfam" id="PF23560">
    <property type="entry name" value="GBD_Hemicentin"/>
    <property type="match status" value="1"/>
</dbReference>
<dbReference type="Pfam" id="PF07679">
    <property type="entry name" value="I-set"/>
    <property type="match status" value="34"/>
</dbReference>
<dbReference type="Pfam" id="PF13927">
    <property type="entry name" value="Ig_3"/>
    <property type="match status" value="9"/>
</dbReference>
<dbReference type="Pfam" id="PF00090">
    <property type="entry name" value="TSP_1"/>
    <property type="match status" value="6"/>
</dbReference>
<dbReference type="Pfam" id="PF25106">
    <property type="entry name" value="VWA_4"/>
    <property type="match status" value="1"/>
</dbReference>
<dbReference type="PRINTS" id="PR01832">
    <property type="entry name" value="VEGFRECEPTOR"/>
</dbReference>
<dbReference type="SMART" id="SM00181">
    <property type="entry name" value="EGF"/>
    <property type="match status" value="8"/>
</dbReference>
<dbReference type="SMART" id="SM00179">
    <property type="entry name" value="EGF_CA"/>
    <property type="match status" value="8"/>
</dbReference>
<dbReference type="SMART" id="SM00682">
    <property type="entry name" value="G2F"/>
    <property type="match status" value="1"/>
</dbReference>
<dbReference type="SMART" id="SM00409">
    <property type="entry name" value="IG"/>
    <property type="match status" value="44"/>
</dbReference>
<dbReference type="SMART" id="SM00408">
    <property type="entry name" value="IGc2"/>
    <property type="match status" value="44"/>
</dbReference>
<dbReference type="SMART" id="SM00406">
    <property type="entry name" value="IGv"/>
    <property type="match status" value="14"/>
</dbReference>
<dbReference type="SMART" id="SM00209">
    <property type="entry name" value="TSP1"/>
    <property type="match status" value="6"/>
</dbReference>
<dbReference type="SUPFAM" id="SSF54511">
    <property type="entry name" value="GFP-like"/>
    <property type="match status" value="1"/>
</dbReference>
<dbReference type="SUPFAM" id="SSF57184">
    <property type="entry name" value="Growth factor receptor domain"/>
    <property type="match status" value="3"/>
</dbReference>
<dbReference type="SUPFAM" id="SSF48726">
    <property type="entry name" value="Immunoglobulin"/>
    <property type="match status" value="44"/>
</dbReference>
<dbReference type="SUPFAM" id="SSF82895">
    <property type="entry name" value="TSP-1 type 1 repeat"/>
    <property type="match status" value="6"/>
</dbReference>
<dbReference type="SUPFAM" id="SSF53300">
    <property type="entry name" value="vWA-like"/>
    <property type="match status" value="1"/>
</dbReference>
<dbReference type="PROSITE" id="PS00010">
    <property type="entry name" value="ASX_HYDROXYL"/>
    <property type="match status" value="5"/>
</dbReference>
<dbReference type="PROSITE" id="PS01186">
    <property type="entry name" value="EGF_2"/>
    <property type="match status" value="3"/>
</dbReference>
<dbReference type="PROSITE" id="PS50026">
    <property type="entry name" value="EGF_3"/>
    <property type="match status" value="5"/>
</dbReference>
<dbReference type="PROSITE" id="PS01187">
    <property type="entry name" value="EGF_CA"/>
    <property type="match status" value="8"/>
</dbReference>
<dbReference type="PROSITE" id="PS50835">
    <property type="entry name" value="IG_LIKE"/>
    <property type="match status" value="43"/>
</dbReference>
<dbReference type="PROSITE" id="PS50993">
    <property type="entry name" value="NIDOGEN_G2"/>
    <property type="match status" value="1"/>
</dbReference>
<dbReference type="PROSITE" id="PS50092">
    <property type="entry name" value="TSP1"/>
    <property type="match status" value="6"/>
</dbReference>
<name>HMCN1_MOUSE</name>
<protein>
    <recommendedName>
        <fullName evidence="16">Hemicentin-1</fullName>
    </recommendedName>
    <alternativeName>
        <fullName evidence="14">Fibulin-6</fullName>
        <shortName evidence="14">FIBL-6</shortName>
    </alternativeName>
</protein>
<sequence length="5634" mass="611561">MIAQEVVHTVFLVALFRSSLAGDGTPQSESRAEEIPEGASTLAFVFDVTGSMYDDLVQVIEGASKILETSLKRPKRPLYNFALVPFHDPEIGPVTITTDPKKFQYELRELYVQGGGDCPEMSIGAIKIALEISLPGSFIYVFTDARSKDYRLTHEVLQLIQQKQSQVVFVLTGDCDDRNHIGYKVYEEIASTSSGQVFHLDKKQVNEVLKWVEEAVQASKVHLLSTDHLEHAVNTWKIPFDPSLKEVTVSLSGPSPVIEIRNPFGKLIKKGFGLNELLNIHNSAKVVNVKEPEAGMWTVKTSSSGRHSVRITGLSTIDFRAGFSRKPTLDFKKTMSRPVQGIPTYVLLNTSGISSPARVDRLELLSISGGSLKTIPVKHYPDRKPYGIWNISDFIPPDEAFFLKVTGYDKDGYLFQRVSSVSFSSIVPDAPKVTMPTRTLGYYLQPGQILCSVESFLPFTLSFMRDGIALGVDQYLRESASVNWDFTKVTLSDEGFYDCIAVSSAGTGRAQTFFDVSEPPPIIQLPNNVTVTPGERAVLACLVISAVDYNLTWQRSGRDIRLADSARIRTLANLSLELRSVKIGDAGEYRCVVSSEGGSAAASVFLTVQEKPKVTVMPKNQSFTGGSEISIMCSATGYPKPKIVWTMNEMFIMGSHRYRMTSEGTLFIKNAVPKDAGTYACLASNAAGTDKQTSTLRYIEAPKLVVEQSELLVALGDTTVMECKTSGIPPPQVKWFKGDLELRPSTFLSIDPLVGLLKIQETQDLDAGDYTCVAINEAGRATGRLTLDVGSPPVFIQEPSDVAVEIGSNVTLPCYVQGYPEPKIKWRRLDNMPVFSRPFSVSFISQLRTGALFISNLWASDKGTYICEAENQFGKIQSQTTVTVTGLVAPLIGISPSMASVIEGQPLTLPCTLLAGNPIPERRWMKNSAMLVQNPYITVRSDGSLHIERVRLQDGGKYTCVASNVAGTNNKTTSVAVHVLPSIQHGQQILSTIEGVPVTLPCRASGIPKPSITWSKKGELISTSSAKFSAGADGSLYVVSPGSEESGEYICTATNAAGYAKRKVQLTVYVRPRVFGDQRGLSQDKPVEISVLAGEEAILPCEAKSLPPPIITWAKDSQLISPFSPRHTFLPSGSMKITETRVSDSGMYLCVATNIAGNVTQSVKLSVHVPPKIQHGNRHIKVQVGQRVDILCNAHGSPPPVITWFKSGRPFLDGAQHPGSPDGTLSIEQAVISDAGVYTCAATNIAGSDEAEVTLHVQEPPSVEDLQPPFNTPFQERLANQRIEFPCPAKGTPKPTIKWLHNGREVTGQEPGVSILEDGALLVIASVTPHNNGEYICVAVNEAGTTERKYNLKVHVPPVIRDKEHVTNVSVLTSQLASLYCEVEGTPSPVITWYKDDIQVTESSTVQIVNNGKILKLFKVSAEDAGRYSCKAINIAGTSQKDFSVNVLVPPSILGASSPSEVSVVLNHNVTLQCPGTGVPFPAIHWFKDGKPLFLGDPNIELSDRGQSLHLRNARRSDKGRYQCTVSNAAGKQAKDIKLTVYVPPSIKGGNITTEISALLNSIVKLECETRGLPVPAITWYKDGQVVTSSSQALYIDKGQLLHIQRAQVSDSATYTCHAANVAGTAEKSFHVDIYVPPTIEGDLTAPSNKQVIIGQSLILECKAAGNPPPILTWLKDGVPVKASDNIHIEAGGKKLEILSALEVDRGQYICVATSVAGEREIKYEVDVLVPPAVEGGEETSYFIVLANNLLELDCQVSGSPPPTIMWLKGGQLIDERDGFKILLNGRKLVIAQAQVSDTGLYQCVATNIAGDHRKEFEVTVHVPPTIKSSDLPEKTVVRYKPVTLQCIANGIPNPSITWLKDDQPVNTAHGNLKIQSSGRVLQIAKALLEDAGRYTCVATNAAGEAHQHTQLHVHEPPSLDDAGKMRNETVVVNNPIQLECKATGKPLPVITWYKDSHPLSGSASAAFLKRGQVLEIGSAQISDAGIYKCVAINSAGATELFYSLQVHVPPSISGSSSMVEVVVNNLARLECEARGIPAPSLTWLKDGSPVSSFSNGIQILSGGRILALTSAQMSDAGRYTCVAVNAAGEKQRDIDLRVYAPPNIMGEEQNVSVLIGQAVELFCQSDAVPPPTLMWLKDGRPLLKRPGLSISENGSVLKIEDAQAGDTGRYTCEATNVAGKTEKNYNVNVWVPPSIYGSDELVQLTAIEGNLITLLCESSGIPPPDLTWKKKGSLVLADSAGRVHILSGGRRLQISIAEKADAGLYTCVASNVAGVAKKEYNLQVYIRPSITNSGGHRPEITVIRGKSISLECEVQGIPQPTVTWMKDGRPLTKGKGVEILDEGRILQLKNVHVSDTGRYVCVAVNVAGMTDKRYDLSVHAPPSIIGNHGVPENVSVVEKSSVSLTCEASGIPLPSITWLKDGWPVNLGSSVKILSGGRMLRLMQTRPEDAGQYTCIVRNAAGEDRKMFGLSVLVPPHIVGENTLEDVKIKEKQSVTLTCEVRGNPVPQITWHKDGQLLQEDEAHHMMSGGRFLQITNAQVSHTGRYTCLASNIAGDKSKSFRLNVFVSPTIAGVDSDGSPEDVIVILNSPTSLVCEAYSYPPATITWFKDGTPLESNRNIRILPGGRTLQILNAQEDNAGRYSCVATNEAGEKIKHYEVKVYIPPIIKKGDLLGPGLSPKEVKIRVNSSLTLECEAYAIPSASLRWYKDGQPLKSDDHVTIAASGHTLQIKEAQISDTGRYTCVASNLAGEDELDFDVNIQVPPSFQKLWEIGNMLDTGRSGEAKDVIINNPLSLHCETNAAPPPTLTWYKDGRPLTSSDRVLILPGGRVLQIPRAKVEDAGRYTCVAVNEAGEDSLRYDVHVLLPPVIKGANSDLPEEVTVLVNKSTQMECSSSGNPAPRNYWQKDGQILLEDEHHKFQSDGRSLQILNAQITDTGRYVCVAENTAGSAKKYFNLNVHVPPSVIGPNHEHLSVVVNHFISLNCEVSGFPPPDLSWLKNEEPIKPNTNVLTVPGGRTLQIIRAKISDGGDYTCIAINQAGESKKKVSLTVHVPPSIKDHGSQSLSIVNVREGTSVSLECESNAVPPPVITWSKNGRMIPDSTNVEILTGGQTLHIRRAEVSDTGQYVCRAINVAGRDDKNFHLNVYVPPTIEGPETEVIVETISNPVTLTCDATGIPPPTITWLKNHKPIENSDPLEVHILSGGSKLQIARPQRSNSGNYTCVASNMEGKAQKNFILFIQVPPSVAGAEVPSEVSVLLGENVELVCNADGIPTPHLQWLRDGKPIVNGETERVRVTTDGSTLNIYRALTSDMGKYTCVATNPAGEEDRIFNLNVYVPPKIRGNKEEAEKLMALVDTSINIECKATGTPPPQINWLKNGLPLPISSHIRLLSAGQVVRIVRAQVSDIAVYTCVASNRAGVDSKHYSLQVFVPPNMDNAMGTEEITIVKGSSTSMTCFTDGTPAPSMSWLRDGQPLAPDAHLTVSTQGMVLQLIKAETEDTGKYTCVATNEAGEVSKHFVLKVLEPPHINGSEGPGEVSVIVNNPLELSCIASGIPAPKISWMKDGRPFLQTEQVQTLEGGAILRVSSAQVEDTGRYTCLASSPAGDDDKEYLVRVHVPPNIAGMDEAQDFTVLRNRQVTLECKSDAVPPPVIMWLKNREQLQATPRVRILSGGRYLQINNADLGDTANYTCVASNIAGKTTREFNLTVNVPPSIGGGPQSLVTLLNKSIALECRAEGVPAPRITWRKDGVVLAESHARYSILENGFLHIESAHVTDTGRYLCMATNVAGTDRRRIDLQVHVPPSIAMGPTNVTVTVNVQTTLACEATGIPKPSVTWRKNGHLLNVDQNQNSYRLLSSGSLVIISPSVDDTASYECTVTSDAGEDKRAVDLTVQVPPTIADEPMDFLVTRQAPAVMTCSASGVPVPSIHWTKNGLRLLPRGDGYRILSSGAIEIPTTQLNHAGRYTCVARNAAGSAHRHVTLRVQEPPVIQPQPSELDVILNNPILLPCEATGIPTPFITWQKEGINVITSGKSLAILPSGSLQISRAVRGDAGTYMCVAQNPAGTALGKVKLNVQVPPVISSHQKEYVVTMDKPVSLLCETEGSPPPDITWHKDGHALTESIRQRILNSGALQIAFAQPDDAGQYTCMAANMAGSSSVSSTLTVHVPPRIQSTEVHFTVNENSQAVLPCVADGIPTPAIHWEKDGVLIANLLGKYTAQPYGELILENVVLEDSGTYTCVANNAAGEDTRIVTLAVHTLPTFTELPGDLSLNKGEQLRLSCKAVGIPLPKLTWTFNNNIIPAHFDSINGHSELVIEKVSKEDSGTYVCTAENSVGFVKAIGFVYVKEPPVFKGDYPSNWIEPLGGNAILNCEVKGDPAPTIQWSRKGADIEISHRIRQLGNGSLAIYGTVNEDAGDYTCVAANEAGMVERSMSLTLQSSPIITLEPVETVVDAGGRVILDCQAAGEPQPTITWSRQGQPISWDNRLSMLPNSSLYIAAARKEDTSEYECVARNLMGSVLVRVPVIVQVHGGFSLWSAWRPCSVTCGKGIQKRSRLCDNPPPANGGRPCQGADSEARHCHNKLCPVDGHWSEWSFWEDCSRSCGHGNQTRTRTCSNPPAQHGGRPCEGHAVETIMCNIRPCPVHGVWNAWQPWSACSKSCGKGSQTRMRLCNNPPPSFGGAHCSGAETQMQVCNERHCPVDGRWATWSSWSACTVSCGGGARKRTRDCSDPVPQYGGNKCEGTGVQSDFCNSDPCPTHGNWSPWSGWGTCSRTCNGGQMRRYRTCDNPRPSNGGRACGGPDTQIQRCNTDMCPVDGSWGTWHSWSHCSVSCGGGERTRKRLCDNPVPTKGGRSCPGDATQVSRCNMQACPGGPQRARGSVIGNINDIEFGIAFLNATITDSPNTDTRVIQAKITNVPRSLGPAMRKIISILNPIYWTTAKEIGEAVNGFTLTNAVFKRETQVEFATGEVLRMTHVARGLDSDGALLLDVIVSGQVLQLHSPAEVGVKDYTEDYIQTGPGQLYAYSTRLFTIDGISIPYTWNHTIFYDQAWGKMPFLVETLHASSIESDYNQLEETLGFKIHASISKGDRSNQCPSGFILDSVGPFCADEDECTAGNPCSHTCHNAIGAYYCSCPKGLTIAADGRTCQDIDECALGGHTCRAGQDCDNTIGSYRCVVHCGTGFRRTSDGLSCQDINECQESSPCHQRCFNVIGSFHCGCEAGYQLKGRKCIDVNECRQNVCRPDQHCKNTRGGYKCIDLCPSGMTKAENGTCIDIDECKDGTHQCRYNQICENTRGSYRCACPRGYRSQGVGRPCIDINECEQVPKPCAHQCSNSPGSFKCICLPGQQLLGDGKSCAGLERLSNYGTQYSSYTLERFSPVRSDYQPSQHYRQYSQLYSSYSEYRNSRASFSRNRRTIRKTCPEGSEANHETCVDIDECQNRDTCQHECKNTIGSYQCVCPPGYRLMLNGKTCQDVDECLEQNVRCGPNRMCFNMRGSYQCIDTPCPPNYQRDPVLGFCLKNCPPNDLECTLSPYALEYKLVSLPFGIAANQDLIRLVAYTQDGVMHPRTTFLMIDEEPAVPFALRDENLKGVVYTTRPLREAETYRMKVGALSYSANGTIEYQTTFIVYIAVSAYPY</sequence>
<reference evidence="17" key="1">
    <citation type="journal article" date="2009" name="PLoS Biol.">
        <title>Lineage-specific biology revealed by a finished genome assembly of the mouse.</title>
        <authorList>
            <person name="Church D.M."/>
            <person name="Goodstadt L."/>
            <person name="Hillier L.W."/>
            <person name="Zody M.C."/>
            <person name="Goldstein S."/>
            <person name="She X."/>
            <person name="Bult C.J."/>
            <person name="Agarwala R."/>
            <person name="Cherry J.L."/>
            <person name="DiCuccio M."/>
            <person name="Hlavina W."/>
            <person name="Kapustin Y."/>
            <person name="Meric P."/>
            <person name="Maglott D."/>
            <person name="Birtle Z."/>
            <person name="Marques A.C."/>
            <person name="Graves T."/>
            <person name="Zhou S."/>
            <person name="Teague B."/>
            <person name="Potamousis K."/>
            <person name="Churas C."/>
            <person name="Place M."/>
            <person name="Herschleb J."/>
            <person name="Runnheim R."/>
            <person name="Forrest D."/>
            <person name="Amos-Landgraf J."/>
            <person name="Schwartz D.C."/>
            <person name="Cheng Z."/>
            <person name="Lindblad-Toh K."/>
            <person name="Eichler E.E."/>
            <person name="Ponting C.P."/>
        </authorList>
    </citation>
    <scope>NUCLEOTIDE SEQUENCE [LARGE SCALE GENOMIC DNA]</scope>
    <source>
        <strain evidence="17">C57BL/6J</strain>
    </source>
</reference>
<reference evidence="15" key="2">
    <citation type="journal article" date="2007" name="J. Histochem. Cytochem.">
        <title>Hemicentins assemble on diverse epithelia in the mouse.</title>
        <authorList>
            <person name="Xu X."/>
            <person name="Dong C."/>
            <person name="Vogel B.E."/>
        </authorList>
    </citation>
    <scope>FUNCTION</scope>
    <scope>SUBCELLULAR LOCATION</scope>
    <scope>TISSUE SPECIFICITY</scope>
</reference>
<reference key="3">
    <citation type="journal article" date="2010" name="Cell">
        <title>A tissue-specific atlas of mouse protein phosphorylation and expression.</title>
        <authorList>
            <person name="Huttlin E.L."/>
            <person name="Jedrychowski M.P."/>
            <person name="Elias J.E."/>
            <person name="Goswami T."/>
            <person name="Rad R."/>
            <person name="Beausoleil S.A."/>
            <person name="Villen J."/>
            <person name="Haas W."/>
            <person name="Sowa M.E."/>
            <person name="Gygi S.P."/>
        </authorList>
    </citation>
    <scope>IDENTIFICATION BY MASS SPECTROMETRY [LARGE SCALE ANALYSIS]</scope>
    <source>
        <tissue>Lung</tissue>
        <tissue>Spleen</tissue>
    </source>
</reference>
<reference evidence="15" key="4">
    <citation type="journal article" date="2011" name="Curr. Biol.">
        <title>A secreted protein promotes cleavage furrow maturation during cytokinesis.</title>
        <authorList>
            <person name="Xu X."/>
            <person name="Vogel B.E."/>
        </authorList>
    </citation>
    <scope>FUNCTION</scope>
    <scope>SUBCELLULAR LOCATION</scope>
    <scope>DISRUPTION PHENOTYPE</scope>
</reference>
<reference evidence="15" key="5">
    <citation type="journal article" date="2014" name="Cardiovasc. Res.">
        <title>Expression of fibulin-6 in failing hearts and its role for cardiac fibroblast migration.</title>
        <authorList>
            <person name="Chowdhury A."/>
            <person name="Herzog C."/>
            <person name="Hasselbach L."/>
            <person name="Khouzani H.L."/>
            <person name="Zhang J."/>
            <person name="Hammerschmidt M."/>
            <person name="Rudat C."/>
            <person name="Kispert A."/>
            <person name="Gaestel M."/>
            <person name="Menon M.B."/>
            <person name="Tudorache I."/>
            <person name="Hilfiker-Kleiner D."/>
            <person name="Muehlfeld C."/>
            <person name="Schmitto J.D."/>
            <person name="Mueller M."/>
            <person name="Theilmeier G."/>
        </authorList>
    </citation>
    <scope>FUNCTION</scope>
    <scope>SUBCELLULAR LOCATION</scope>
    <scope>TISSUE SPECIFICITY</scope>
    <scope>INDUCTION BY MYOCARDIAL INFARCTION</scope>
</reference>
<reference key="6">
    <citation type="journal article" date="2018" name="Am. J. Physiol.">
        <title>Hemicentin 1 influences podocyte dynamic changes in glomerular diseases.</title>
        <authorList>
            <person name="Toffoli B."/>
            <person name="Zennaro C."/>
            <person name="Winkler C."/>
            <person name="Giordano Attianese G.M.P."/>
            <person name="Bernardi S."/>
            <person name="Carraro M."/>
            <person name="Gilardi F."/>
            <person name="Desvergne B."/>
        </authorList>
    </citation>
    <scope>SUBCELLULAR LOCATION</scope>
    <scope>TISSUE SPECIFICITY</scope>
    <scope>DEVELOPMENTAL STAGE</scope>
    <scope>INDUCTION</scope>
</reference>
<reference key="7">
    <citation type="journal article" date="2020" name="Dev. Dyn.">
        <title>Mammalian hemicentin 1 is assembled into tracks in the extracellular matrix of multiple tissues.</title>
        <authorList>
            <person name="Lin M.H."/>
            <person name="Pope B.D. III"/>
            <person name="Sasaki T."/>
            <person name="Keeley D.P."/>
            <person name="Sherwood D.R."/>
            <person name="Miner J.H."/>
        </authorList>
    </citation>
    <scope>SUBCELLULAR LOCATION</scope>
    <scope>TISSUE SPECIFICITY</scope>
    <scope>DISRUPTION PHENOTYPE</scope>
</reference>
<reference key="8">
    <citation type="journal article" date="2021" name="Sci. Rep.">
        <title>Hemicentin-1 is an essential extracellular matrix component of the dermal-epidermal and myotendinous junctions.</title>
        <authorList>
            <person name="Welcker D."/>
            <person name="Stein C."/>
            <person name="Feitosa N.M."/>
            <person name="Armistead J."/>
            <person name="Zhang J.L."/>
            <person name="Luetke S."/>
            <person name="Kleinridders A."/>
            <person name="Bruening J.C."/>
            <person name="Eming S.A."/>
            <person name="Sengle G."/>
            <person name="Niehoff A."/>
            <person name="Bloch W."/>
            <person name="Hammerschmidt M."/>
        </authorList>
    </citation>
    <scope>FUNCTION</scope>
    <scope>SUBCELLULAR LOCATION</scope>
    <scope>TISSUE SPECIFICITY</scope>
    <scope>INDUCTION</scope>
    <scope>DISRUPTION PHENOTYPE</scope>
</reference>
<proteinExistence type="evidence at protein level"/>